<organism>
    <name type="scientific">Drosophila melanogaster</name>
    <name type="common">Fruit fly</name>
    <dbReference type="NCBI Taxonomy" id="7227"/>
    <lineage>
        <taxon>Eukaryota</taxon>
        <taxon>Metazoa</taxon>
        <taxon>Ecdysozoa</taxon>
        <taxon>Arthropoda</taxon>
        <taxon>Hexapoda</taxon>
        <taxon>Insecta</taxon>
        <taxon>Pterygota</taxon>
        <taxon>Neoptera</taxon>
        <taxon>Endopterygota</taxon>
        <taxon>Diptera</taxon>
        <taxon>Brachycera</taxon>
        <taxon>Muscomorpha</taxon>
        <taxon>Ephydroidea</taxon>
        <taxon>Drosophilidae</taxon>
        <taxon>Drosophila</taxon>
        <taxon>Sophophora</taxon>
    </lineage>
</organism>
<name>FOXL1_DROME</name>
<protein>
    <recommendedName>
        <fullName evidence="7">Fork head domain-containing protein L1</fullName>
    </recommendedName>
</protein>
<gene>
    <name evidence="7 8" type="primary">FoxL1</name>
    <name evidence="6" type="synonym">FD2</name>
    <name evidence="8" type="synonym">fd64A</name>
    <name evidence="8" type="ORF">CG1132</name>
</gene>
<evidence type="ECO:0000250" key="1">
    <source>
        <dbReference type="UniProtKB" id="Q12952"/>
    </source>
</evidence>
<evidence type="ECO:0000255" key="2">
    <source>
        <dbReference type="PROSITE-ProRule" id="PRU00089"/>
    </source>
</evidence>
<evidence type="ECO:0000256" key="3">
    <source>
        <dbReference type="SAM" id="MobiDB-lite"/>
    </source>
</evidence>
<evidence type="ECO:0000269" key="4">
    <source>
    </source>
</evidence>
<evidence type="ECO:0000269" key="5">
    <source>
    </source>
</evidence>
<evidence type="ECO:0000303" key="6">
    <source>
    </source>
</evidence>
<evidence type="ECO:0000303" key="7">
    <source>
    </source>
</evidence>
<evidence type="ECO:0000312" key="8">
    <source>
        <dbReference type="FlyBase" id="FBgn0004895"/>
    </source>
</evidence>
<keyword id="KW-0217">Developmental protein</keyword>
<keyword id="KW-0238">DNA-binding</keyword>
<keyword id="KW-0539">Nucleus</keyword>
<keyword id="KW-1185">Reference proteome</keyword>
<keyword id="KW-0804">Transcription</keyword>
<keyword id="KW-0805">Transcription regulation</keyword>
<proteinExistence type="evidence at protein level"/>
<dbReference type="EMBL" id="AE014296">
    <property type="protein sequence ID" value="AAF47821.1"/>
    <property type="molecule type" value="Genomic_DNA"/>
</dbReference>
<dbReference type="EMBL" id="M96441">
    <property type="protein sequence ID" value="AAA28533.1"/>
    <property type="molecule type" value="Genomic_DNA"/>
</dbReference>
<dbReference type="PIR" id="B46178">
    <property type="entry name" value="B46178"/>
</dbReference>
<dbReference type="RefSeq" id="NP_001246609.1">
    <property type="nucleotide sequence ID" value="NM_001259680.2"/>
</dbReference>
<dbReference type="RefSeq" id="NP_523912.1">
    <property type="nucleotide sequence ID" value="NM_079188.3"/>
</dbReference>
<dbReference type="SMR" id="Q02360"/>
<dbReference type="BioGRID" id="63957">
    <property type="interactions" value="16"/>
</dbReference>
<dbReference type="DIP" id="DIP-19169N"/>
<dbReference type="FunCoup" id="Q02360">
    <property type="interactions" value="3"/>
</dbReference>
<dbReference type="IntAct" id="Q02360">
    <property type="interactions" value="6"/>
</dbReference>
<dbReference type="STRING" id="7227.FBpp0301542"/>
<dbReference type="PaxDb" id="7227-FBpp0301542"/>
<dbReference type="DNASU" id="38471"/>
<dbReference type="EnsemblMetazoa" id="FBtr0073192">
    <property type="protein sequence ID" value="FBpp0073048"/>
    <property type="gene ID" value="FBgn0004895"/>
</dbReference>
<dbReference type="EnsemblMetazoa" id="FBtr0309789">
    <property type="protein sequence ID" value="FBpp0301542"/>
    <property type="gene ID" value="FBgn0004895"/>
</dbReference>
<dbReference type="GeneID" id="38471"/>
<dbReference type="KEGG" id="dme:Dmel_CG1132"/>
<dbReference type="AGR" id="FB:FBgn0004895"/>
<dbReference type="CTD" id="2300"/>
<dbReference type="FlyBase" id="FBgn0004895">
    <property type="gene designation" value="FoxL1"/>
</dbReference>
<dbReference type="VEuPathDB" id="VectorBase:FBgn0004895"/>
<dbReference type="eggNOG" id="KOG2294">
    <property type="taxonomic scope" value="Eukaryota"/>
</dbReference>
<dbReference type="GeneTree" id="ENSGT00940000162251"/>
<dbReference type="HOGENOM" id="CLU_797590_0_0_1"/>
<dbReference type="InParanoid" id="Q02360"/>
<dbReference type="OMA" id="SLFNNEP"/>
<dbReference type="OrthoDB" id="5954824at2759"/>
<dbReference type="PhylomeDB" id="Q02360"/>
<dbReference type="BioGRID-ORCS" id="38471">
    <property type="hits" value="0 hits in 3 CRISPR screens"/>
</dbReference>
<dbReference type="GenomeRNAi" id="38471"/>
<dbReference type="PRO" id="PR:Q02360"/>
<dbReference type="Proteomes" id="UP000000803">
    <property type="component" value="Chromosome 3L"/>
</dbReference>
<dbReference type="Bgee" id="FBgn0004895">
    <property type="expression patterns" value="Expressed in somatic mesoderm (Drosophila) and 10 other cell types or tissues"/>
</dbReference>
<dbReference type="ExpressionAtlas" id="Q02360">
    <property type="expression patterns" value="baseline and differential"/>
</dbReference>
<dbReference type="GO" id="GO:0005634">
    <property type="term" value="C:nucleus"/>
    <property type="evidence" value="ECO:0000314"/>
    <property type="project" value="FlyBase"/>
</dbReference>
<dbReference type="GO" id="GO:0000981">
    <property type="term" value="F:DNA-binding transcription factor activity, RNA polymerase II-specific"/>
    <property type="evidence" value="ECO:0000318"/>
    <property type="project" value="GO_Central"/>
</dbReference>
<dbReference type="GO" id="GO:0000978">
    <property type="term" value="F:RNA polymerase II cis-regulatory region sequence-specific DNA binding"/>
    <property type="evidence" value="ECO:0000318"/>
    <property type="project" value="GO_Central"/>
</dbReference>
<dbReference type="GO" id="GO:0009653">
    <property type="term" value="P:anatomical structure morphogenesis"/>
    <property type="evidence" value="ECO:0000318"/>
    <property type="project" value="GO_Central"/>
</dbReference>
<dbReference type="GO" id="GO:0030154">
    <property type="term" value="P:cell differentiation"/>
    <property type="evidence" value="ECO:0000318"/>
    <property type="project" value="GO_Central"/>
</dbReference>
<dbReference type="GO" id="GO:0010628">
    <property type="term" value="P:positive regulation of gene expression"/>
    <property type="evidence" value="ECO:0000315"/>
    <property type="project" value="FlyBase"/>
</dbReference>
<dbReference type="GO" id="GO:0006357">
    <property type="term" value="P:regulation of transcription by RNA polymerase II"/>
    <property type="evidence" value="ECO:0000318"/>
    <property type="project" value="GO_Central"/>
</dbReference>
<dbReference type="FunFam" id="1.10.10.10:FF:000016">
    <property type="entry name" value="Forkhead box protein I1"/>
    <property type="match status" value="1"/>
</dbReference>
<dbReference type="Gene3D" id="1.10.10.10">
    <property type="entry name" value="Winged helix-like DNA-binding domain superfamily/Winged helix DNA-binding domain"/>
    <property type="match status" value="1"/>
</dbReference>
<dbReference type="InterPro" id="IPR001766">
    <property type="entry name" value="Fork_head_dom"/>
</dbReference>
<dbReference type="InterPro" id="IPR050211">
    <property type="entry name" value="FOX_domain-containing"/>
</dbReference>
<dbReference type="InterPro" id="IPR018122">
    <property type="entry name" value="TF_fork_head_CS_1"/>
</dbReference>
<dbReference type="InterPro" id="IPR030456">
    <property type="entry name" value="TF_fork_head_CS_2"/>
</dbReference>
<dbReference type="InterPro" id="IPR036388">
    <property type="entry name" value="WH-like_DNA-bd_sf"/>
</dbReference>
<dbReference type="InterPro" id="IPR036390">
    <property type="entry name" value="WH_DNA-bd_sf"/>
</dbReference>
<dbReference type="PANTHER" id="PTHR11829:SF388">
    <property type="entry name" value="FORK HEAD DOMAIN-CONTAINING PROTEIN L1-RELATED"/>
    <property type="match status" value="1"/>
</dbReference>
<dbReference type="PANTHER" id="PTHR11829">
    <property type="entry name" value="FORKHEAD BOX PROTEIN"/>
    <property type="match status" value="1"/>
</dbReference>
<dbReference type="Pfam" id="PF00250">
    <property type="entry name" value="Forkhead"/>
    <property type="match status" value="1"/>
</dbReference>
<dbReference type="PRINTS" id="PR00053">
    <property type="entry name" value="FORKHEAD"/>
</dbReference>
<dbReference type="SMART" id="SM00339">
    <property type="entry name" value="FH"/>
    <property type="match status" value="1"/>
</dbReference>
<dbReference type="SUPFAM" id="SSF46785">
    <property type="entry name" value="Winged helix' DNA-binding domain"/>
    <property type="match status" value="1"/>
</dbReference>
<dbReference type="PROSITE" id="PS00657">
    <property type="entry name" value="FORK_HEAD_1"/>
    <property type="match status" value="1"/>
</dbReference>
<dbReference type="PROSITE" id="PS00658">
    <property type="entry name" value="FORK_HEAD_2"/>
    <property type="match status" value="1"/>
</dbReference>
<dbReference type="PROSITE" id="PS50039">
    <property type="entry name" value="FORK_HEAD_3"/>
    <property type="match status" value="1"/>
</dbReference>
<feature type="chain" id="PRO_0000091910" description="Fork head domain-containing protein L1">
    <location>
        <begin position="1"/>
        <end position="365"/>
    </location>
</feature>
<feature type="DNA-binding region" description="Fork-head" evidence="2">
    <location>
        <begin position="90"/>
        <end position="181"/>
    </location>
</feature>
<feature type="region of interest" description="Disordered" evidence="3">
    <location>
        <begin position="183"/>
        <end position="224"/>
    </location>
</feature>
<feature type="region of interest" description="Disordered" evidence="3">
    <location>
        <begin position="276"/>
        <end position="295"/>
    </location>
</feature>
<feature type="region of interest" description="Disordered" evidence="3">
    <location>
        <begin position="305"/>
        <end position="324"/>
    </location>
</feature>
<feature type="compositionally biased region" description="Basic residues" evidence="3">
    <location>
        <begin position="186"/>
        <end position="199"/>
    </location>
</feature>
<feature type="compositionally biased region" description="Basic and acidic residues" evidence="3">
    <location>
        <begin position="201"/>
        <end position="212"/>
    </location>
</feature>
<feature type="compositionally biased region" description="Low complexity" evidence="3">
    <location>
        <begin position="285"/>
        <end position="295"/>
    </location>
</feature>
<feature type="mutagenesis site" description="Embryonic salivary glands display irregularities that are consistent with potential migration defects, including subtle variations in lumenal diameter, bending/folding, and occasional branching of the lumen. No effect on muscle or hindgut morphology." evidence="5">
    <location>
        <begin position="52"/>
        <end position="365"/>
    </location>
</feature>
<reference key="1">
    <citation type="journal article" date="2000" name="Science">
        <title>The genome sequence of Drosophila melanogaster.</title>
        <authorList>
            <person name="Adams M.D."/>
            <person name="Celniker S.E."/>
            <person name="Holt R.A."/>
            <person name="Evans C.A."/>
            <person name="Gocayne J.D."/>
            <person name="Amanatides P.G."/>
            <person name="Scherer S.E."/>
            <person name="Li P.W."/>
            <person name="Hoskins R.A."/>
            <person name="Galle R.F."/>
            <person name="George R.A."/>
            <person name="Lewis S.E."/>
            <person name="Richards S."/>
            <person name="Ashburner M."/>
            <person name="Henderson S.N."/>
            <person name="Sutton G.G."/>
            <person name="Wortman J.R."/>
            <person name="Yandell M.D."/>
            <person name="Zhang Q."/>
            <person name="Chen L.X."/>
            <person name="Brandon R.C."/>
            <person name="Rogers Y.-H.C."/>
            <person name="Blazej R.G."/>
            <person name="Champe M."/>
            <person name="Pfeiffer B.D."/>
            <person name="Wan K.H."/>
            <person name="Doyle C."/>
            <person name="Baxter E.G."/>
            <person name="Helt G."/>
            <person name="Nelson C.R."/>
            <person name="Miklos G.L.G."/>
            <person name="Abril J.F."/>
            <person name="Agbayani A."/>
            <person name="An H.-J."/>
            <person name="Andrews-Pfannkoch C."/>
            <person name="Baldwin D."/>
            <person name="Ballew R.M."/>
            <person name="Basu A."/>
            <person name="Baxendale J."/>
            <person name="Bayraktaroglu L."/>
            <person name="Beasley E.M."/>
            <person name="Beeson K.Y."/>
            <person name="Benos P.V."/>
            <person name="Berman B.P."/>
            <person name="Bhandari D."/>
            <person name="Bolshakov S."/>
            <person name="Borkova D."/>
            <person name="Botchan M.R."/>
            <person name="Bouck J."/>
            <person name="Brokstein P."/>
            <person name="Brottier P."/>
            <person name="Burtis K.C."/>
            <person name="Busam D.A."/>
            <person name="Butler H."/>
            <person name="Cadieu E."/>
            <person name="Center A."/>
            <person name="Chandra I."/>
            <person name="Cherry J.M."/>
            <person name="Cawley S."/>
            <person name="Dahlke C."/>
            <person name="Davenport L.B."/>
            <person name="Davies P."/>
            <person name="de Pablos B."/>
            <person name="Delcher A."/>
            <person name="Deng Z."/>
            <person name="Mays A.D."/>
            <person name="Dew I."/>
            <person name="Dietz S.M."/>
            <person name="Dodson K."/>
            <person name="Doup L.E."/>
            <person name="Downes M."/>
            <person name="Dugan-Rocha S."/>
            <person name="Dunkov B.C."/>
            <person name="Dunn P."/>
            <person name="Durbin K.J."/>
            <person name="Evangelista C.C."/>
            <person name="Ferraz C."/>
            <person name="Ferriera S."/>
            <person name="Fleischmann W."/>
            <person name="Fosler C."/>
            <person name="Gabrielian A.E."/>
            <person name="Garg N.S."/>
            <person name="Gelbart W.M."/>
            <person name="Glasser K."/>
            <person name="Glodek A."/>
            <person name="Gong F."/>
            <person name="Gorrell J.H."/>
            <person name="Gu Z."/>
            <person name="Guan P."/>
            <person name="Harris M."/>
            <person name="Harris N.L."/>
            <person name="Harvey D.A."/>
            <person name="Heiman T.J."/>
            <person name="Hernandez J.R."/>
            <person name="Houck J."/>
            <person name="Hostin D."/>
            <person name="Houston K.A."/>
            <person name="Howland T.J."/>
            <person name="Wei M.-H."/>
            <person name="Ibegwam C."/>
            <person name="Jalali M."/>
            <person name="Kalush F."/>
            <person name="Karpen G.H."/>
            <person name="Ke Z."/>
            <person name="Kennison J.A."/>
            <person name="Ketchum K.A."/>
            <person name="Kimmel B.E."/>
            <person name="Kodira C.D."/>
            <person name="Kraft C.L."/>
            <person name="Kravitz S."/>
            <person name="Kulp D."/>
            <person name="Lai Z."/>
            <person name="Lasko P."/>
            <person name="Lei Y."/>
            <person name="Levitsky A.A."/>
            <person name="Li J.H."/>
            <person name="Li Z."/>
            <person name="Liang Y."/>
            <person name="Lin X."/>
            <person name="Liu X."/>
            <person name="Mattei B."/>
            <person name="McIntosh T.C."/>
            <person name="McLeod M.P."/>
            <person name="McPherson D."/>
            <person name="Merkulov G."/>
            <person name="Milshina N.V."/>
            <person name="Mobarry C."/>
            <person name="Morris J."/>
            <person name="Moshrefi A."/>
            <person name="Mount S.M."/>
            <person name="Moy M."/>
            <person name="Murphy B."/>
            <person name="Murphy L."/>
            <person name="Muzny D.M."/>
            <person name="Nelson D.L."/>
            <person name="Nelson D.R."/>
            <person name="Nelson K.A."/>
            <person name="Nixon K."/>
            <person name="Nusskern D.R."/>
            <person name="Pacleb J.M."/>
            <person name="Palazzolo M."/>
            <person name="Pittman G.S."/>
            <person name="Pan S."/>
            <person name="Pollard J."/>
            <person name="Puri V."/>
            <person name="Reese M.G."/>
            <person name="Reinert K."/>
            <person name="Remington K."/>
            <person name="Saunders R.D.C."/>
            <person name="Scheeler F."/>
            <person name="Shen H."/>
            <person name="Shue B.C."/>
            <person name="Siden-Kiamos I."/>
            <person name="Simpson M."/>
            <person name="Skupski M.P."/>
            <person name="Smith T.J."/>
            <person name="Spier E."/>
            <person name="Spradling A.C."/>
            <person name="Stapleton M."/>
            <person name="Strong R."/>
            <person name="Sun E."/>
            <person name="Svirskas R."/>
            <person name="Tector C."/>
            <person name="Turner R."/>
            <person name="Venter E."/>
            <person name="Wang A.H."/>
            <person name="Wang X."/>
            <person name="Wang Z.-Y."/>
            <person name="Wassarman D.A."/>
            <person name="Weinstock G.M."/>
            <person name="Weissenbach J."/>
            <person name="Williams S.M."/>
            <person name="Woodage T."/>
            <person name="Worley K.C."/>
            <person name="Wu D."/>
            <person name="Yang S."/>
            <person name="Yao Q.A."/>
            <person name="Ye J."/>
            <person name="Yeh R.-F."/>
            <person name="Zaveri J.S."/>
            <person name="Zhan M."/>
            <person name="Zhang G."/>
            <person name="Zhao Q."/>
            <person name="Zheng L."/>
            <person name="Zheng X.H."/>
            <person name="Zhong F.N."/>
            <person name="Zhong W."/>
            <person name="Zhou X."/>
            <person name="Zhu S.C."/>
            <person name="Zhu X."/>
            <person name="Smith H.O."/>
            <person name="Gibbs R.A."/>
            <person name="Myers E.W."/>
            <person name="Rubin G.M."/>
            <person name="Venter J.C."/>
        </authorList>
    </citation>
    <scope>NUCLEOTIDE SEQUENCE [LARGE SCALE GENOMIC DNA]</scope>
    <source>
        <strain>Berkeley</strain>
    </source>
</reference>
<reference key="2">
    <citation type="journal article" date="2002" name="Genome Biol.">
        <title>Annotation of the Drosophila melanogaster euchromatic genome: a systematic review.</title>
        <authorList>
            <person name="Misra S."/>
            <person name="Crosby M.A."/>
            <person name="Mungall C.J."/>
            <person name="Matthews B.B."/>
            <person name="Campbell K.S."/>
            <person name="Hradecky P."/>
            <person name="Huang Y."/>
            <person name="Kaminker J.S."/>
            <person name="Millburn G.H."/>
            <person name="Prochnik S.E."/>
            <person name="Smith C.D."/>
            <person name="Tupy J.L."/>
            <person name="Whitfield E.J."/>
            <person name="Bayraktaroglu L."/>
            <person name="Berman B.P."/>
            <person name="Bettencourt B.R."/>
            <person name="Celniker S.E."/>
            <person name="de Grey A.D.N.J."/>
            <person name="Drysdale R.A."/>
            <person name="Harris N.L."/>
            <person name="Richter J."/>
            <person name="Russo S."/>
            <person name="Schroeder A.J."/>
            <person name="Shu S.Q."/>
            <person name="Stapleton M."/>
            <person name="Yamada C."/>
            <person name="Ashburner M."/>
            <person name="Gelbart W.M."/>
            <person name="Rubin G.M."/>
            <person name="Lewis S.E."/>
        </authorList>
    </citation>
    <scope>GENOME REANNOTATION</scope>
    <source>
        <strain>Berkeley</strain>
    </source>
</reference>
<reference key="3">
    <citation type="journal article" date="1992" name="Proc. Natl. Acad. Sci. U.S.A.">
        <title>Developmentally regulated Drosophila gene family encoding the fork head domain.</title>
        <authorList>
            <person name="Haecker U."/>
            <person name="Grossniklaus U."/>
            <person name="Gehring W.J."/>
            <person name="Jaeckle H."/>
        </authorList>
    </citation>
    <scope>NUCLEOTIDE SEQUENCE [GENOMIC DNA] OF 76-209</scope>
    <scope>TISSUE SPECIFICITY</scope>
    <scope>DEVELOPMENTAL STAGE</scope>
</reference>
<reference key="4">
    <citation type="journal article" date="2016" name="Dev. Biol.">
        <title>Drosophila FoxL1 non-autonomously coordinates organ placement during embryonic development.</title>
        <authorList>
            <person name="Hanlon C.D."/>
            <person name="Andrew D.J."/>
        </authorList>
    </citation>
    <scope>FUNCTION</scope>
    <scope>SUBCELLULAR LOCATION</scope>
    <scope>TISSUE SPECIFICITY</scope>
    <scope>DEVELOPMENTAL STAGE</scope>
    <scope>MUTAGENESIS OF 52-MET--PRO-365</scope>
</reference>
<sequence>MLPSCYANGSMLPDNEELVNSMLANPDYLRTQVSPNPLAPSAVGGAGMEGLMCGSFSPAFYYQGIDSFLALHNNIWGLPISFLHNSHRPEKPPFSYIALIAMAISSAPNQRLTLSGIYKFIMDKFPYYRENKQGWQNSIRHNLSLNDCFVKIPRDKNTIEDNDSAGKGSYWMLDSSASDMFEQGNYRRRRTRRQRHCGHPNRYERESGKDSNDGNSSAAEIRSPSEPLSDFDIFCNERPNYSDRITDLHRQYLSVSLGFNSLFNNEARGLRPLPEIRECPDDVDASSSSSKAMQSSMELHEELHSPSAFTPPLNRRETSSSGAPVLAEAFNGIKDVVDAPGSSPVASSNRSKTTLFTIDNIIGKP</sequence>
<comment type="function">
    <text evidence="1 5">Transcription factor (By similarity). Coordinates the placement and migration of various organs during embryogenesis, including the salivary glands, hemocytes, germ cells and Malpighian tubules (PubMed:27618755). Likely acts non-cell-autonomously to provide signaling cues from the mesoderm/musculature to nearby tissues (PubMed:27618755). Mediates salivary gland positioning, at least in part, through activation of the secreted signal Sema2a (PubMed:27618755).</text>
</comment>
<comment type="subcellular location">
    <subcellularLocation>
        <location evidence="5">Nucleus</location>
    </subcellularLocation>
</comment>
<comment type="tissue specificity">
    <text evidence="4 5">During embryogenesis, detected in several mesodermal tissues including the hindgut mesoderm, the ventral intersegmental 5 (VIS5) muscle in thoracic segments T2 and T3, muscles homologous to VIS5 in the abdominal segments, and a small subset of visceral mesoderm cells found near to where the gastric caeca form (at protein level) (PubMed:27618755). Expressed in embryonic posterior mesoderm (PubMed:1356269).</text>
</comment>
<comment type="developmental stage">
    <text evidence="4 5">Expressed in embryos, maximal level between 5-12 hours (PubMed:1356269). Expressed in the hindgut mesoderm from embryonic stage 9 to the end of embryogenesis (PubMed:27618755). Also detected in the thoracic and abdominal segments from stages 12 to 14, persisting at high levels in thoracic segments T2 and T3 to embryonic stage 16 (PubMed:27618755).</text>
</comment>
<accession>Q02360</accession>
<accession>Q9VZK0</accession>